<dbReference type="EMBL" id="AK297108">
    <property type="protein sequence ID" value="BAG59618.1"/>
    <property type="molecule type" value="mRNA"/>
</dbReference>
<dbReference type="EMBL" id="AL161457">
    <property type="status" value="NOT_ANNOTATED_CDS"/>
    <property type="molecule type" value="Genomic_DNA"/>
</dbReference>
<dbReference type="EMBL" id="AL353608">
    <property type="status" value="NOT_ANNOTATED_CDS"/>
    <property type="molecule type" value="Genomic_DNA"/>
</dbReference>
<dbReference type="EMBL" id="AL353616">
    <property type="status" value="NOT_ANNOTATED_CDS"/>
    <property type="molecule type" value="Genomic_DNA"/>
</dbReference>
<dbReference type="EMBL" id="BC033073">
    <property type="protein sequence ID" value="AAH33073.1"/>
    <property type="status" value="ALT_INIT"/>
    <property type="molecule type" value="mRNA"/>
</dbReference>
<dbReference type="EMBL" id="Y13478">
    <property type="protein sequence ID" value="CAA73882.1"/>
    <property type="status" value="ALT_INIT"/>
    <property type="molecule type" value="Genomic_DNA"/>
</dbReference>
<dbReference type="EMBL" id="L40933">
    <property type="protein sequence ID" value="AAC41948.1"/>
    <property type="status" value="ALT_INIT"/>
    <property type="molecule type" value="Genomic_DNA"/>
</dbReference>
<dbReference type="CCDS" id="CCDS6622.2">
    <molecule id="Q15124-1"/>
</dbReference>
<dbReference type="PIR" id="S62629">
    <property type="entry name" value="S62629"/>
</dbReference>
<dbReference type="RefSeq" id="NP_068800.2">
    <molecule id="Q15124-1"/>
    <property type="nucleotide sequence ID" value="NM_021965.4"/>
</dbReference>
<dbReference type="PDB" id="7U21">
    <property type="method" value="X-ray"/>
    <property type="resolution" value="1.90 A"/>
    <property type="chains" value="C/F=465-473"/>
</dbReference>
<dbReference type="PDBsum" id="7U21"/>
<dbReference type="SMR" id="Q15124"/>
<dbReference type="BioGRID" id="111258">
    <property type="interactions" value="9"/>
</dbReference>
<dbReference type="FunCoup" id="Q15124">
    <property type="interactions" value="116"/>
</dbReference>
<dbReference type="STRING" id="9606.ENSP00000379678"/>
<dbReference type="iPTMnet" id="Q15124"/>
<dbReference type="PhosphoSitePlus" id="Q15124"/>
<dbReference type="SwissPalm" id="Q15124"/>
<dbReference type="BioMuta" id="PGM5"/>
<dbReference type="DMDM" id="152031655"/>
<dbReference type="jPOST" id="Q15124"/>
<dbReference type="MassIVE" id="Q15124"/>
<dbReference type="PaxDb" id="9606-ENSP00000379678"/>
<dbReference type="PeptideAtlas" id="Q15124"/>
<dbReference type="ProteomicsDB" id="60450">
    <molecule id="Q15124-1"/>
</dbReference>
<dbReference type="ProteomicsDB" id="60451">
    <molecule id="Q15124-2"/>
</dbReference>
<dbReference type="Pumba" id="Q15124"/>
<dbReference type="TopDownProteomics" id="Q15124-2">
    <molecule id="Q15124-2"/>
</dbReference>
<dbReference type="Antibodypedia" id="26751">
    <property type="antibodies" value="125 antibodies from 20 providers"/>
</dbReference>
<dbReference type="DNASU" id="5239"/>
<dbReference type="Ensembl" id="ENST00000396392.5">
    <molecule id="Q15124-2"/>
    <property type="protein sequence ID" value="ENSP00000379674.1"/>
    <property type="gene ID" value="ENSG00000154330.13"/>
</dbReference>
<dbReference type="Ensembl" id="ENST00000396396.6">
    <molecule id="Q15124-1"/>
    <property type="protein sequence ID" value="ENSP00000379678.1"/>
    <property type="gene ID" value="ENSG00000154330.13"/>
</dbReference>
<dbReference type="GeneID" id="5239"/>
<dbReference type="KEGG" id="hsa:5239"/>
<dbReference type="MANE-Select" id="ENST00000396396.6">
    <property type="protein sequence ID" value="ENSP00000379678.1"/>
    <property type="RefSeq nucleotide sequence ID" value="NM_021965.4"/>
    <property type="RefSeq protein sequence ID" value="NP_068800.2"/>
</dbReference>
<dbReference type="UCSC" id="uc004agr.3">
    <molecule id="Q15124-1"/>
    <property type="organism name" value="human"/>
</dbReference>
<dbReference type="AGR" id="HGNC:8908"/>
<dbReference type="CTD" id="5239"/>
<dbReference type="DisGeNET" id="5239"/>
<dbReference type="GeneCards" id="PGM5"/>
<dbReference type="HGNC" id="HGNC:8908">
    <property type="gene designation" value="PGM5"/>
</dbReference>
<dbReference type="HPA" id="ENSG00000154330">
    <property type="expression patterns" value="Tissue enhanced (intestine)"/>
</dbReference>
<dbReference type="MIM" id="600981">
    <property type="type" value="gene"/>
</dbReference>
<dbReference type="neXtProt" id="NX_Q15124"/>
<dbReference type="OpenTargets" id="ENSG00000154330"/>
<dbReference type="PharmGKB" id="PA33245"/>
<dbReference type="VEuPathDB" id="HostDB:ENSG00000154330"/>
<dbReference type="eggNOG" id="KOG0625">
    <property type="taxonomic scope" value="Eukaryota"/>
</dbReference>
<dbReference type="GeneTree" id="ENSGT00940000158126"/>
<dbReference type="HOGENOM" id="CLU_009330_0_0_1"/>
<dbReference type="InParanoid" id="Q15124"/>
<dbReference type="OMA" id="YIPDYAG"/>
<dbReference type="OrthoDB" id="2291at2759"/>
<dbReference type="PAN-GO" id="Q15124">
    <property type="GO annotations" value="7 GO annotations based on evolutionary models"/>
</dbReference>
<dbReference type="PhylomeDB" id="Q15124"/>
<dbReference type="TreeFam" id="TF300350"/>
<dbReference type="PathwayCommons" id="Q15124"/>
<dbReference type="SignaLink" id="Q15124"/>
<dbReference type="BioGRID-ORCS" id="5239">
    <property type="hits" value="25 hits in 1140 CRISPR screens"/>
</dbReference>
<dbReference type="ChiTaRS" id="PGM5">
    <property type="organism name" value="human"/>
</dbReference>
<dbReference type="GeneWiki" id="PGM5"/>
<dbReference type="GenomeRNAi" id="5239"/>
<dbReference type="Pharos" id="Q15124">
    <property type="development level" value="Tbio"/>
</dbReference>
<dbReference type="PRO" id="PR:Q15124"/>
<dbReference type="Proteomes" id="UP000005640">
    <property type="component" value="Chromosome 9"/>
</dbReference>
<dbReference type="RNAct" id="Q15124">
    <property type="molecule type" value="protein"/>
</dbReference>
<dbReference type="Bgee" id="ENSG00000154330">
    <property type="expression patterns" value="Expressed in saphenous vein and 173 other cell types or tissues"/>
</dbReference>
<dbReference type="ExpressionAtlas" id="Q15124">
    <property type="expression patterns" value="baseline and differential"/>
</dbReference>
<dbReference type="GO" id="GO:0005912">
    <property type="term" value="C:adherens junction"/>
    <property type="evidence" value="ECO:0000314"/>
    <property type="project" value="MGI"/>
</dbReference>
<dbReference type="GO" id="GO:0030055">
    <property type="term" value="C:cell-substrate junction"/>
    <property type="evidence" value="ECO:0000318"/>
    <property type="project" value="GO_Central"/>
</dbReference>
<dbReference type="GO" id="GO:0043034">
    <property type="term" value="C:costamere"/>
    <property type="evidence" value="ECO:0000314"/>
    <property type="project" value="UniProtKB"/>
</dbReference>
<dbReference type="GO" id="GO:0009898">
    <property type="term" value="C:cytoplasmic side of plasma membrane"/>
    <property type="evidence" value="ECO:0000314"/>
    <property type="project" value="UniProtKB"/>
</dbReference>
<dbReference type="GO" id="GO:0005829">
    <property type="term" value="C:cytosol"/>
    <property type="evidence" value="ECO:0000318"/>
    <property type="project" value="GO_Central"/>
</dbReference>
<dbReference type="GO" id="GO:0016010">
    <property type="term" value="C:dystrophin-associated glycoprotein complex"/>
    <property type="evidence" value="ECO:0000250"/>
    <property type="project" value="UniProtKB"/>
</dbReference>
<dbReference type="GO" id="GO:0005925">
    <property type="term" value="C:focal adhesion"/>
    <property type="evidence" value="ECO:0000314"/>
    <property type="project" value="UniProtKB"/>
</dbReference>
<dbReference type="GO" id="GO:0014704">
    <property type="term" value="C:intercalated disc"/>
    <property type="evidence" value="ECO:0000314"/>
    <property type="project" value="UniProtKB"/>
</dbReference>
<dbReference type="GO" id="GO:0042383">
    <property type="term" value="C:sarcolemma"/>
    <property type="evidence" value="ECO:0000314"/>
    <property type="project" value="UniProtKB"/>
</dbReference>
<dbReference type="GO" id="GO:0005914">
    <property type="term" value="C:spot adherens junction"/>
    <property type="evidence" value="ECO:0000314"/>
    <property type="project" value="UniProtKB"/>
</dbReference>
<dbReference type="GO" id="GO:0001725">
    <property type="term" value="C:stress fiber"/>
    <property type="evidence" value="ECO:0000314"/>
    <property type="project" value="UniProtKB"/>
</dbReference>
<dbReference type="GO" id="GO:0030018">
    <property type="term" value="C:Z disc"/>
    <property type="evidence" value="ECO:0007669"/>
    <property type="project" value="Ensembl"/>
</dbReference>
<dbReference type="GO" id="GO:0016868">
    <property type="term" value="F:intramolecular phosphotransferase activity"/>
    <property type="evidence" value="ECO:0007669"/>
    <property type="project" value="InterPro"/>
</dbReference>
<dbReference type="GO" id="GO:0000287">
    <property type="term" value="F:magnesium ion binding"/>
    <property type="evidence" value="ECO:0007669"/>
    <property type="project" value="InterPro"/>
</dbReference>
<dbReference type="GO" id="GO:0005198">
    <property type="term" value="F:structural molecule activity"/>
    <property type="evidence" value="ECO:0000303"/>
    <property type="project" value="UniProtKB"/>
</dbReference>
<dbReference type="GO" id="GO:0005975">
    <property type="term" value="P:carbohydrate metabolic process"/>
    <property type="evidence" value="ECO:0000318"/>
    <property type="project" value="GO_Central"/>
</dbReference>
<dbReference type="GO" id="GO:0007155">
    <property type="term" value="P:cell adhesion"/>
    <property type="evidence" value="ECO:0007669"/>
    <property type="project" value="UniProtKB-KW"/>
</dbReference>
<dbReference type="GO" id="GO:0030239">
    <property type="term" value="P:myofibril assembly"/>
    <property type="evidence" value="ECO:0000318"/>
    <property type="project" value="GO_Central"/>
</dbReference>
<dbReference type="GO" id="GO:0014706">
    <property type="term" value="P:striated muscle tissue development"/>
    <property type="evidence" value="ECO:0000318"/>
    <property type="project" value="GO_Central"/>
</dbReference>
<dbReference type="FunFam" id="3.30.310.50:FF:000002">
    <property type="entry name" value="Phosphoglucomutase 5"/>
    <property type="match status" value="1"/>
</dbReference>
<dbReference type="FunFam" id="3.40.120.10:FF:000004">
    <property type="entry name" value="Phosphoglucomutase 5"/>
    <property type="match status" value="1"/>
</dbReference>
<dbReference type="FunFam" id="3.40.120.10:FF:000005">
    <property type="entry name" value="Phosphoglucomutase 5"/>
    <property type="match status" value="1"/>
</dbReference>
<dbReference type="FunFam" id="3.40.120.10:FF:000007">
    <property type="entry name" value="Phosphoglucomutase 5"/>
    <property type="match status" value="1"/>
</dbReference>
<dbReference type="Gene3D" id="3.40.120.10">
    <property type="entry name" value="Alpha-D-Glucose-1,6-Bisphosphate, subunit A, domain 3"/>
    <property type="match status" value="3"/>
</dbReference>
<dbReference type="Gene3D" id="3.30.310.50">
    <property type="entry name" value="Alpha-D-phosphohexomutase, C-terminal domain"/>
    <property type="match status" value="1"/>
</dbReference>
<dbReference type="InterPro" id="IPR005844">
    <property type="entry name" value="A-D-PHexomutase_a/b/a-I"/>
</dbReference>
<dbReference type="InterPro" id="IPR016055">
    <property type="entry name" value="A-D-PHexomutase_a/b/a-I/II/III"/>
</dbReference>
<dbReference type="InterPro" id="IPR005845">
    <property type="entry name" value="A-D-PHexomutase_a/b/a-II"/>
</dbReference>
<dbReference type="InterPro" id="IPR005846">
    <property type="entry name" value="A-D-PHexomutase_a/b/a-III"/>
</dbReference>
<dbReference type="InterPro" id="IPR036900">
    <property type="entry name" value="A-D-PHexomutase_C_sf"/>
</dbReference>
<dbReference type="InterPro" id="IPR016066">
    <property type="entry name" value="A-D-PHexomutase_CS"/>
</dbReference>
<dbReference type="InterPro" id="IPR005841">
    <property type="entry name" value="Alpha-D-phosphohexomutase_SF"/>
</dbReference>
<dbReference type="InterPro" id="IPR045244">
    <property type="entry name" value="PGM"/>
</dbReference>
<dbReference type="NCBIfam" id="NF005737">
    <property type="entry name" value="PRK07564.1-1"/>
    <property type="match status" value="1"/>
</dbReference>
<dbReference type="PANTHER" id="PTHR22573:SF27">
    <property type="entry name" value="PHOSPHOGLUCOMUTASE-LIKE PROTEIN 5"/>
    <property type="match status" value="1"/>
</dbReference>
<dbReference type="PANTHER" id="PTHR22573">
    <property type="entry name" value="PHOSPHOHEXOMUTASE FAMILY MEMBER"/>
    <property type="match status" value="1"/>
</dbReference>
<dbReference type="Pfam" id="PF24947">
    <property type="entry name" value="PGM1_C_vert_fung"/>
    <property type="match status" value="1"/>
</dbReference>
<dbReference type="Pfam" id="PF02878">
    <property type="entry name" value="PGM_PMM_I"/>
    <property type="match status" value="1"/>
</dbReference>
<dbReference type="Pfam" id="PF02879">
    <property type="entry name" value="PGM_PMM_II"/>
    <property type="match status" value="1"/>
</dbReference>
<dbReference type="Pfam" id="PF02880">
    <property type="entry name" value="PGM_PMM_III"/>
    <property type="match status" value="1"/>
</dbReference>
<dbReference type="PRINTS" id="PR00509">
    <property type="entry name" value="PGMPMM"/>
</dbReference>
<dbReference type="SUPFAM" id="SSF55957">
    <property type="entry name" value="Phosphoglucomutase, C-terminal domain"/>
    <property type="match status" value="1"/>
</dbReference>
<dbReference type="SUPFAM" id="SSF53738">
    <property type="entry name" value="Phosphoglucomutase, first 3 domains"/>
    <property type="match status" value="3"/>
</dbReference>
<dbReference type="PROSITE" id="PS00710">
    <property type="entry name" value="PGM_PMM"/>
    <property type="match status" value="1"/>
</dbReference>
<evidence type="ECO:0000250" key="1">
    <source>
        <dbReference type="UniProtKB" id="D3ZVR9"/>
    </source>
</evidence>
<evidence type="ECO:0000250" key="2">
    <source>
        <dbReference type="UniProtKB" id="Q8BZF8"/>
    </source>
</evidence>
<evidence type="ECO:0000256" key="3">
    <source>
        <dbReference type="SAM" id="MobiDB-lite"/>
    </source>
</evidence>
<evidence type="ECO:0000269" key="4">
    <source>
    </source>
</evidence>
<evidence type="ECO:0000269" key="5">
    <source>
    </source>
</evidence>
<evidence type="ECO:0000303" key="6">
    <source>
    </source>
</evidence>
<evidence type="ECO:0000303" key="7">
    <source>
    </source>
</evidence>
<evidence type="ECO:0000305" key="8"/>
<evidence type="ECO:0000312" key="9">
    <source>
        <dbReference type="HGNC" id="HGNC:8908"/>
    </source>
</evidence>
<evidence type="ECO:0007744" key="10">
    <source>
    </source>
</evidence>
<sequence>MEGSPIPVLTVPTAPYEDQRPAGGGGLRRPTGLFEGQRNYLPNFIQSVLSSIDLRDRQGCTMVVGSDGRYFSRTAIEIVVQMAAANGIGRLIIGQNGILSTPAVSCIIRKIKAAGGIILTASHCPGGPGGEFGVKFNVANGGPAPDVVSDKIYQISKTIEEYAICPDLRIDLSRLGRQEFDLENKFKPFRVEIVDPVDIYLNLLRTIFDFHAIKGLLTGPSQLKIRIDAMHGVMGPYVRKVLCDELGAPANSAINCVPLEDFGGQHPDPNLTYATTLLEAMKGGEYGFGAAFDADGDRYMILGQNGFFVSPSDSLAIIAANLSCIPYFRQMGVRGFGRSMPTSMALDRVAKSMKVPVYETPAGWRFFSNLMDSGRCNLCGEESFGTGSDHLREKDGLWAVLVWLSIIAARKQSVEEIVRDHWAKFGRHYYCRFDYEGLDPKTTYYIMRDLEALVTDKSFIGQQFAVGSHVYSVAKTDSFEYVDPVDGTVTKKQGLRIIFSDASRLIFRLSSSSGVRATLRLYAESYERDPSGHDQEPQAVLSPLIAIALKISQIHERTGRRGPTVIT</sequence>
<gene>
    <name evidence="9" type="primary">PGM5</name>
    <name type="synonym">PGMRP</name>
</gene>
<accession>Q15124</accession>
<accession>B1AM46</accession>
<accession>B4DLQ6</accession>
<accession>Q5VYV3</accession>
<accession>Q8N527</accession>
<accession>Q9UDH4</accession>
<comment type="function">
    <text evidence="4">Component of adherens-type cell-cell and cell-matrix junctions (PubMed:8175905). Has no phosphoglucomutase activity in vitro (PubMed:8175905).</text>
</comment>
<comment type="subunit">
    <text evidence="1 2">Interacts with DMD/dystrophin; the interaction is direct (By similarity). Interacts with UTRN/utrophin (By similarity).</text>
</comment>
<comment type="subcellular location">
    <subcellularLocation>
        <location evidence="4">Cell junction</location>
        <location evidence="4">Adherens junction</location>
    </subcellularLocation>
    <subcellularLocation>
        <location evidence="4">Cytoplasm</location>
        <location evidence="4">Cytoskeleton</location>
    </subcellularLocation>
    <subcellularLocation>
        <location evidence="2">Cell membrane</location>
        <location evidence="2">Sarcolemma</location>
    </subcellularLocation>
    <text evidence="4">Concentrated in focal contacts at the ends of actin bundles, and associated with actin filaments.</text>
</comment>
<comment type="alternative products">
    <event type="alternative splicing"/>
    <isoform>
        <id>Q15124-1</id>
        <name>1</name>
        <sequence type="displayed"/>
    </isoform>
    <isoform>
        <id>Q15124-2</id>
        <name>2</name>
        <sequence type="described" ref="VSP_030014 VSP_030015"/>
    </isoform>
</comment>
<comment type="tissue specificity">
    <text evidence="4 5">Detected in smooth and cardiac muscle at high levels and in skeletal muscle at low level. Present in other tissues due to vascular or other smooth muscle component. Low levels are present in liver, kidney, skin and brain (at protein level).</text>
</comment>
<comment type="developmental stage">
    <text evidence="4">In the developing aorta, expressed at low levels in 10-12 week old fetuses. Levels increase progressively in 24 week fetus, 6 month old child and 1.5 year old child aortic smooth muscle, reaching a maximum at maturity.</text>
</comment>
<comment type="similarity">
    <text evidence="8">Belongs to the phosphohexose mutase family.</text>
</comment>
<comment type="sequence caution" evidence="8">
    <conflict type="erroneous initiation">
        <sequence resource="EMBL-CDS" id="AAC41948"/>
    </conflict>
</comment>
<comment type="sequence caution" evidence="8">
    <conflict type="erroneous initiation">
        <sequence resource="EMBL-CDS" id="AAH33073"/>
    </conflict>
</comment>
<comment type="sequence caution" evidence="8">
    <conflict type="erroneous initiation">
        <sequence resource="EMBL-CDS" id="CAA73882"/>
    </conflict>
</comment>
<organism>
    <name type="scientific">Homo sapiens</name>
    <name type="common">Human</name>
    <dbReference type="NCBI Taxonomy" id="9606"/>
    <lineage>
        <taxon>Eukaryota</taxon>
        <taxon>Metazoa</taxon>
        <taxon>Chordata</taxon>
        <taxon>Craniata</taxon>
        <taxon>Vertebrata</taxon>
        <taxon>Euteleostomi</taxon>
        <taxon>Mammalia</taxon>
        <taxon>Eutheria</taxon>
        <taxon>Euarchontoglires</taxon>
        <taxon>Primates</taxon>
        <taxon>Haplorrhini</taxon>
        <taxon>Catarrhini</taxon>
        <taxon>Hominidae</taxon>
        <taxon>Homo</taxon>
    </lineage>
</organism>
<feature type="chain" id="PRO_0000147787" description="Phosphoglucomutase-like protein 5">
    <location>
        <begin position="1"/>
        <end position="567"/>
    </location>
</feature>
<feature type="region of interest" description="Disordered" evidence="3">
    <location>
        <begin position="1"/>
        <end position="26"/>
    </location>
</feature>
<feature type="modified residue" description="Phosphothreonine" evidence="2">
    <location>
        <position position="120"/>
    </location>
</feature>
<feature type="modified residue" description="Phosphoserine" evidence="10">
    <location>
        <position position="122"/>
    </location>
</feature>
<feature type="splice variant" id="VSP_030014" description="In isoform 2." evidence="6">
    <original>G</original>
    <variation>V</variation>
    <location>
        <position position="387"/>
    </location>
</feature>
<feature type="splice variant" id="VSP_030015" description="In isoform 2." evidence="6">
    <location>
        <begin position="388"/>
        <end position="567"/>
    </location>
</feature>
<feature type="sequence conflict" description="In Ref. 4; CAA73882." evidence="8" ref="4">
    <original>A</original>
    <variation>S</variation>
    <location>
        <position position="22"/>
    </location>
</feature>
<feature type="sequence conflict" description="In Ref. 7; AA sequence." evidence="8" ref="7">
    <original>D</original>
    <variation>E</variation>
    <location>
        <position position="244"/>
    </location>
</feature>
<feature type="sequence conflict" description="In Ref. 7; AA sequence." evidence="8" ref="7">
    <original>ED</original>
    <variation>DE</variation>
    <location>
        <begin position="260"/>
        <end position="261"/>
    </location>
</feature>
<reference key="1">
    <citation type="journal article" date="2004" name="Nat. Genet.">
        <title>Complete sequencing and characterization of 21,243 full-length human cDNAs.</title>
        <authorList>
            <person name="Ota T."/>
            <person name="Suzuki Y."/>
            <person name="Nishikawa T."/>
            <person name="Otsuki T."/>
            <person name="Sugiyama T."/>
            <person name="Irie R."/>
            <person name="Wakamatsu A."/>
            <person name="Hayashi K."/>
            <person name="Sato H."/>
            <person name="Nagai K."/>
            <person name="Kimura K."/>
            <person name="Makita H."/>
            <person name="Sekine M."/>
            <person name="Obayashi M."/>
            <person name="Nishi T."/>
            <person name="Shibahara T."/>
            <person name="Tanaka T."/>
            <person name="Ishii S."/>
            <person name="Yamamoto J."/>
            <person name="Saito K."/>
            <person name="Kawai Y."/>
            <person name="Isono Y."/>
            <person name="Nakamura Y."/>
            <person name="Nagahari K."/>
            <person name="Murakami K."/>
            <person name="Yasuda T."/>
            <person name="Iwayanagi T."/>
            <person name="Wagatsuma M."/>
            <person name="Shiratori A."/>
            <person name="Sudo H."/>
            <person name="Hosoiri T."/>
            <person name="Kaku Y."/>
            <person name="Kodaira H."/>
            <person name="Kondo H."/>
            <person name="Sugawara M."/>
            <person name="Takahashi M."/>
            <person name="Kanda K."/>
            <person name="Yokoi T."/>
            <person name="Furuya T."/>
            <person name="Kikkawa E."/>
            <person name="Omura Y."/>
            <person name="Abe K."/>
            <person name="Kamihara K."/>
            <person name="Katsuta N."/>
            <person name="Sato K."/>
            <person name="Tanikawa M."/>
            <person name="Yamazaki M."/>
            <person name="Ninomiya K."/>
            <person name="Ishibashi T."/>
            <person name="Yamashita H."/>
            <person name="Murakawa K."/>
            <person name="Fujimori K."/>
            <person name="Tanai H."/>
            <person name="Kimata M."/>
            <person name="Watanabe M."/>
            <person name="Hiraoka S."/>
            <person name="Chiba Y."/>
            <person name="Ishida S."/>
            <person name="Ono Y."/>
            <person name="Takiguchi S."/>
            <person name="Watanabe S."/>
            <person name="Yosida M."/>
            <person name="Hotuta T."/>
            <person name="Kusano J."/>
            <person name="Kanehori K."/>
            <person name="Takahashi-Fujii A."/>
            <person name="Hara H."/>
            <person name="Tanase T.-O."/>
            <person name="Nomura Y."/>
            <person name="Togiya S."/>
            <person name="Komai F."/>
            <person name="Hara R."/>
            <person name="Takeuchi K."/>
            <person name="Arita M."/>
            <person name="Imose N."/>
            <person name="Musashino K."/>
            <person name="Yuuki H."/>
            <person name="Oshima A."/>
            <person name="Sasaki N."/>
            <person name="Aotsuka S."/>
            <person name="Yoshikawa Y."/>
            <person name="Matsunawa H."/>
            <person name="Ichihara T."/>
            <person name="Shiohata N."/>
            <person name="Sano S."/>
            <person name="Moriya S."/>
            <person name="Momiyama H."/>
            <person name="Satoh N."/>
            <person name="Takami S."/>
            <person name="Terashima Y."/>
            <person name="Suzuki O."/>
            <person name="Nakagawa S."/>
            <person name="Senoh A."/>
            <person name="Mizoguchi H."/>
            <person name="Goto Y."/>
            <person name="Shimizu F."/>
            <person name="Wakebe H."/>
            <person name="Hishigaki H."/>
            <person name="Watanabe T."/>
            <person name="Sugiyama A."/>
            <person name="Takemoto M."/>
            <person name="Kawakami B."/>
            <person name="Yamazaki M."/>
            <person name="Watanabe K."/>
            <person name="Kumagai A."/>
            <person name="Itakura S."/>
            <person name="Fukuzumi Y."/>
            <person name="Fujimori Y."/>
            <person name="Komiyama M."/>
            <person name="Tashiro H."/>
            <person name="Tanigami A."/>
            <person name="Fujiwara T."/>
            <person name="Ono T."/>
            <person name="Yamada K."/>
            <person name="Fujii Y."/>
            <person name="Ozaki K."/>
            <person name="Hirao M."/>
            <person name="Ohmori Y."/>
            <person name="Kawabata A."/>
            <person name="Hikiji T."/>
            <person name="Kobatake N."/>
            <person name="Inagaki H."/>
            <person name="Ikema Y."/>
            <person name="Okamoto S."/>
            <person name="Okitani R."/>
            <person name="Kawakami T."/>
            <person name="Noguchi S."/>
            <person name="Itoh T."/>
            <person name="Shigeta K."/>
            <person name="Senba T."/>
            <person name="Matsumura K."/>
            <person name="Nakajima Y."/>
            <person name="Mizuno T."/>
            <person name="Morinaga M."/>
            <person name="Sasaki M."/>
            <person name="Togashi T."/>
            <person name="Oyama M."/>
            <person name="Hata H."/>
            <person name="Watanabe M."/>
            <person name="Komatsu T."/>
            <person name="Mizushima-Sugano J."/>
            <person name="Satoh T."/>
            <person name="Shirai Y."/>
            <person name="Takahashi Y."/>
            <person name="Nakagawa K."/>
            <person name="Okumura K."/>
            <person name="Nagase T."/>
            <person name="Nomura N."/>
            <person name="Kikuchi H."/>
            <person name="Masuho Y."/>
            <person name="Yamashita R."/>
            <person name="Nakai K."/>
            <person name="Yada T."/>
            <person name="Nakamura Y."/>
            <person name="Ohara O."/>
            <person name="Isogai T."/>
            <person name="Sugano S."/>
        </authorList>
    </citation>
    <scope>NUCLEOTIDE SEQUENCE [LARGE SCALE MRNA] (ISOFORM 1)</scope>
</reference>
<reference key="2">
    <citation type="journal article" date="2004" name="Nature">
        <title>DNA sequence and analysis of human chromosome 9.</title>
        <authorList>
            <person name="Humphray S.J."/>
            <person name="Oliver K."/>
            <person name="Hunt A.R."/>
            <person name="Plumb R.W."/>
            <person name="Loveland J.E."/>
            <person name="Howe K.L."/>
            <person name="Andrews T.D."/>
            <person name="Searle S."/>
            <person name="Hunt S.E."/>
            <person name="Scott C.E."/>
            <person name="Jones M.C."/>
            <person name="Ainscough R."/>
            <person name="Almeida J.P."/>
            <person name="Ambrose K.D."/>
            <person name="Ashwell R.I.S."/>
            <person name="Babbage A.K."/>
            <person name="Babbage S."/>
            <person name="Bagguley C.L."/>
            <person name="Bailey J."/>
            <person name="Banerjee R."/>
            <person name="Barker D.J."/>
            <person name="Barlow K.F."/>
            <person name="Bates K."/>
            <person name="Beasley H."/>
            <person name="Beasley O."/>
            <person name="Bird C.P."/>
            <person name="Bray-Allen S."/>
            <person name="Brown A.J."/>
            <person name="Brown J.Y."/>
            <person name="Burford D."/>
            <person name="Burrill W."/>
            <person name="Burton J."/>
            <person name="Carder C."/>
            <person name="Carter N.P."/>
            <person name="Chapman J.C."/>
            <person name="Chen Y."/>
            <person name="Clarke G."/>
            <person name="Clark S.Y."/>
            <person name="Clee C.M."/>
            <person name="Clegg S."/>
            <person name="Collier R.E."/>
            <person name="Corby N."/>
            <person name="Crosier M."/>
            <person name="Cummings A.T."/>
            <person name="Davies J."/>
            <person name="Dhami P."/>
            <person name="Dunn M."/>
            <person name="Dutta I."/>
            <person name="Dyer L.W."/>
            <person name="Earthrowl M.E."/>
            <person name="Faulkner L."/>
            <person name="Fleming C.J."/>
            <person name="Frankish A."/>
            <person name="Frankland J.A."/>
            <person name="French L."/>
            <person name="Fricker D.G."/>
            <person name="Garner P."/>
            <person name="Garnett J."/>
            <person name="Ghori J."/>
            <person name="Gilbert J.G.R."/>
            <person name="Glison C."/>
            <person name="Grafham D.V."/>
            <person name="Gribble S."/>
            <person name="Griffiths C."/>
            <person name="Griffiths-Jones S."/>
            <person name="Grocock R."/>
            <person name="Guy J."/>
            <person name="Hall R.E."/>
            <person name="Hammond S."/>
            <person name="Harley J.L."/>
            <person name="Harrison E.S.I."/>
            <person name="Hart E.A."/>
            <person name="Heath P.D."/>
            <person name="Henderson C.D."/>
            <person name="Hopkins B.L."/>
            <person name="Howard P.J."/>
            <person name="Howden P.J."/>
            <person name="Huckle E."/>
            <person name="Johnson C."/>
            <person name="Johnson D."/>
            <person name="Joy A.A."/>
            <person name="Kay M."/>
            <person name="Keenan S."/>
            <person name="Kershaw J.K."/>
            <person name="Kimberley A.M."/>
            <person name="King A."/>
            <person name="Knights A."/>
            <person name="Laird G.K."/>
            <person name="Langford C."/>
            <person name="Lawlor S."/>
            <person name="Leongamornlert D.A."/>
            <person name="Leversha M."/>
            <person name="Lloyd C."/>
            <person name="Lloyd D.M."/>
            <person name="Lovell J."/>
            <person name="Martin S."/>
            <person name="Mashreghi-Mohammadi M."/>
            <person name="Matthews L."/>
            <person name="McLaren S."/>
            <person name="McLay K.E."/>
            <person name="McMurray A."/>
            <person name="Milne S."/>
            <person name="Nickerson T."/>
            <person name="Nisbett J."/>
            <person name="Nordsiek G."/>
            <person name="Pearce A.V."/>
            <person name="Peck A.I."/>
            <person name="Porter K.M."/>
            <person name="Pandian R."/>
            <person name="Pelan S."/>
            <person name="Phillimore B."/>
            <person name="Povey S."/>
            <person name="Ramsey Y."/>
            <person name="Rand V."/>
            <person name="Scharfe M."/>
            <person name="Sehra H.K."/>
            <person name="Shownkeen R."/>
            <person name="Sims S.K."/>
            <person name="Skuce C.D."/>
            <person name="Smith M."/>
            <person name="Steward C.A."/>
            <person name="Swarbreck D."/>
            <person name="Sycamore N."/>
            <person name="Tester J."/>
            <person name="Thorpe A."/>
            <person name="Tracey A."/>
            <person name="Tromans A."/>
            <person name="Thomas D.W."/>
            <person name="Wall M."/>
            <person name="Wallis J.M."/>
            <person name="West A.P."/>
            <person name="Whitehead S.L."/>
            <person name="Willey D.L."/>
            <person name="Williams S.A."/>
            <person name="Wilming L."/>
            <person name="Wray P.W."/>
            <person name="Young L."/>
            <person name="Ashurst J.L."/>
            <person name="Coulson A."/>
            <person name="Blocker H."/>
            <person name="Durbin R.M."/>
            <person name="Sulston J.E."/>
            <person name="Hubbard T."/>
            <person name="Jackson M.J."/>
            <person name="Bentley D.R."/>
            <person name="Beck S."/>
            <person name="Rogers J."/>
            <person name="Dunham I."/>
        </authorList>
    </citation>
    <scope>NUCLEOTIDE SEQUENCE [LARGE SCALE GENOMIC DNA]</scope>
</reference>
<reference key="3">
    <citation type="journal article" date="2004" name="Genome Res.">
        <title>The status, quality, and expansion of the NIH full-length cDNA project: the Mammalian Gene Collection (MGC).</title>
        <authorList>
            <consortium name="The MGC Project Team"/>
        </authorList>
    </citation>
    <scope>NUCLEOTIDE SEQUENCE [LARGE SCALE MRNA] (ISOFORM 2)</scope>
    <source>
        <tissue>Muscle</tissue>
    </source>
</reference>
<reference key="4">
    <citation type="journal article" date="1997" name="Eur. J. Biochem.">
        <title>Characterisation of the promoter which regulates expression of a phosphoglucomutase-related protein, a component of the dystrophin/utrophin cytoskeleton predominantly expressed in smooth muscle.</title>
        <authorList>
            <person name="Moiseeva E.P."/>
            <person name="Critchley D.R."/>
        </authorList>
    </citation>
    <scope>NUCLEOTIDE SEQUENCE [GENOMIC DNA] OF 2-87</scope>
</reference>
<reference key="5">
    <citation type="submission" date="2007-06" db="UniProtKB">
        <authorList>
            <person name="Parker K."/>
        </authorList>
    </citation>
    <scope>PROTEIN SEQUENCE OF 29-55; 158-169; 191-224; 227-239; 355-375; 433-492 AND 497-504</scope>
    <scope>IDENTIFICATION BY MASS SPECTROMETRY</scope>
</reference>
<reference key="6">
    <citation type="journal article" date="1996" name="Eur. J. Biochem.">
        <title>A novel dystrophin/utrophin-associated protein is an enzymatically inactive member of the phosphoglucomutase superfamily.</title>
        <authorList>
            <person name="Moiseeva E.P."/>
            <person name="Belkin A.M."/>
            <person name="Spurr N.K."/>
            <person name="Koteliansky V.E."/>
            <person name="Critchley D.R."/>
        </authorList>
    </citation>
    <scope>NUCLEOTIDE SEQUENCE [GENOMIC DNA] OF 32-567</scope>
    <scope>TISSUE SPECIFICITY</scope>
    <source>
        <tissue>Uterus</tissue>
    </source>
</reference>
<reference key="7">
    <citation type="journal article" date="1994" name="J. Cell Sci.">
        <title>A novel phosphoglucomutase-related protein is concentrated in adherens junctions of muscle and nonmuscle cells.</title>
        <authorList>
            <person name="Belkin A.M."/>
            <person name="Klimanskaya I.V."/>
            <person name="Lukashev M.E."/>
            <person name="Lilley K."/>
            <person name="Critchley D.R."/>
            <person name="Koteliansky V.E."/>
        </authorList>
    </citation>
    <scope>PROTEIN SEQUENCE OF 82-104; 234-262 AND 447-467</scope>
    <scope>FUNCTION</scope>
    <scope>SUBCELLULAR LOCATION</scope>
    <scope>TISSUE SPECIFICITY</scope>
    <scope>DEVELOPMENTAL STAGE</scope>
    <source>
        <tissue>Uterus</tissue>
    </source>
</reference>
<reference key="8">
    <citation type="journal article" date="2014" name="J. Proteomics">
        <title>An enzyme assisted RP-RPLC approach for in-depth analysis of human liver phosphoproteome.</title>
        <authorList>
            <person name="Bian Y."/>
            <person name="Song C."/>
            <person name="Cheng K."/>
            <person name="Dong M."/>
            <person name="Wang F."/>
            <person name="Huang J."/>
            <person name="Sun D."/>
            <person name="Wang L."/>
            <person name="Ye M."/>
            <person name="Zou H."/>
        </authorList>
    </citation>
    <scope>PHOSPHORYLATION [LARGE SCALE ANALYSIS] AT SER-122</scope>
    <scope>IDENTIFICATION BY MASS SPECTROMETRY [LARGE SCALE ANALYSIS]</scope>
    <source>
        <tissue>Liver</tissue>
    </source>
</reference>
<keyword id="KW-0002">3D-structure</keyword>
<keyword id="KW-0025">Alternative splicing</keyword>
<keyword id="KW-0130">Cell adhesion</keyword>
<keyword id="KW-0965">Cell junction</keyword>
<keyword id="KW-1003">Cell membrane</keyword>
<keyword id="KW-0963">Cytoplasm</keyword>
<keyword id="KW-0206">Cytoskeleton</keyword>
<keyword id="KW-0903">Direct protein sequencing</keyword>
<keyword id="KW-0472">Membrane</keyword>
<keyword id="KW-0597">Phosphoprotein</keyword>
<keyword id="KW-1267">Proteomics identification</keyword>
<keyword id="KW-1185">Reference proteome</keyword>
<proteinExistence type="evidence at protein level"/>
<name>PGM5_HUMAN</name>
<protein>
    <recommendedName>
        <fullName evidence="8">Phosphoglucomutase-like protein 5</fullName>
    </recommendedName>
    <alternativeName>
        <fullName evidence="7">Aciculin</fullName>
    </alternativeName>
    <alternativeName>
        <fullName>Phosphoglucomutase-related protein</fullName>
        <shortName>PGM-RP</shortName>
    </alternativeName>
</protein>